<proteinExistence type="inferred from homology"/>
<reference key="1">
    <citation type="journal article" date="2000" name="Nature">
        <title>Complete DNA sequence of a serogroup A strain of Neisseria meningitidis Z2491.</title>
        <authorList>
            <person name="Parkhill J."/>
            <person name="Achtman M."/>
            <person name="James K.D."/>
            <person name="Bentley S.D."/>
            <person name="Churcher C.M."/>
            <person name="Klee S.R."/>
            <person name="Morelli G."/>
            <person name="Basham D."/>
            <person name="Brown D."/>
            <person name="Chillingworth T."/>
            <person name="Davies R.M."/>
            <person name="Davis P."/>
            <person name="Devlin K."/>
            <person name="Feltwell T."/>
            <person name="Hamlin N."/>
            <person name="Holroyd S."/>
            <person name="Jagels K."/>
            <person name="Leather S."/>
            <person name="Moule S."/>
            <person name="Mungall K.L."/>
            <person name="Quail M.A."/>
            <person name="Rajandream M.A."/>
            <person name="Rutherford K.M."/>
            <person name="Simmonds M."/>
            <person name="Skelton J."/>
            <person name="Whitehead S."/>
            <person name="Spratt B.G."/>
            <person name="Barrell B.G."/>
        </authorList>
    </citation>
    <scope>NUCLEOTIDE SEQUENCE [LARGE SCALE GENOMIC DNA]</scope>
    <source>
        <strain>DSM 15465 / Z2491</strain>
    </source>
</reference>
<organism>
    <name type="scientific">Neisseria meningitidis serogroup A / serotype 4A (strain DSM 15465 / Z2491)</name>
    <dbReference type="NCBI Taxonomy" id="122587"/>
    <lineage>
        <taxon>Bacteria</taxon>
        <taxon>Pseudomonadati</taxon>
        <taxon>Pseudomonadota</taxon>
        <taxon>Betaproteobacteria</taxon>
        <taxon>Neisseriales</taxon>
        <taxon>Neisseriaceae</taxon>
        <taxon>Neisseria</taxon>
    </lineage>
</organism>
<accession>Q9JUT0</accession>
<accession>A1IRH3</accession>
<feature type="chain" id="PRO_0000102841" description="Succinate--CoA ligase [ADP-forming] subunit beta">
    <location>
        <begin position="1"/>
        <end position="388"/>
    </location>
</feature>
<feature type="domain" description="ATP-grasp" evidence="1">
    <location>
        <begin position="9"/>
        <end position="245"/>
    </location>
</feature>
<feature type="binding site" evidence="1">
    <location>
        <position position="46"/>
    </location>
    <ligand>
        <name>ATP</name>
        <dbReference type="ChEBI" id="CHEBI:30616"/>
    </ligand>
</feature>
<feature type="binding site" evidence="1">
    <location>
        <begin position="53"/>
        <end position="55"/>
    </location>
    <ligand>
        <name>ATP</name>
        <dbReference type="ChEBI" id="CHEBI:30616"/>
    </ligand>
</feature>
<feature type="binding site" evidence="1">
    <location>
        <position position="100"/>
    </location>
    <ligand>
        <name>ATP</name>
        <dbReference type="ChEBI" id="CHEBI:30616"/>
    </ligand>
</feature>
<feature type="binding site" evidence="1">
    <location>
        <position position="103"/>
    </location>
    <ligand>
        <name>ATP</name>
        <dbReference type="ChEBI" id="CHEBI:30616"/>
    </ligand>
</feature>
<feature type="binding site" evidence="1">
    <location>
        <position position="108"/>
    </location>
    <ligand>
        <name>ATP</name>
        <dbReference type="ChEBI" id="CHEBI:30616"/>
    </ligand>
</feature>
<feature type="binding site" evidence="1">
    <location>
        <position position="200"/>
    </location>
    <ligand>
        <name>Mg(2+)</name>
        <dbReference type="ChEBI" id="CHEBI:18420"/>
    </ligand>
</feature>
<feature type="binding site" evidence="1">
    <location>
        <position position="214"/>
    </location>
    <ligand>
        <name>Mg(2+)</name>
        <dbReference type="ChEBI" id="CHEBI:18420"/>
    </ligand>
</feature>
<feature type="binding site" evidence="1">
    <location>
        <position position="265"/>
    </location>
    <ligand>
        <name>substrate</name>
        <note>ligand shared with subunit alpha</note>
    </ligand>
</feature>
<feature type="binding site" evidence="1">
    <location>
        <begin position="322"/>
        <end position="324"/>
    </location>
    <ligand>
        <name>substrate</name>
        <note>ligand shared with subunit alpha</note>
    </ligand>
</feature>
<gene>
    <name evidence="1" type="primary">sucC</name>
    <name type="ordered locus">NMA1153</name>
</gene>
<comment type="function">
    <text evidence="1">Succinyl-CoA synthetase functions in the citric acid cycle (TCA), coupling the hydrolysis of succinyl-CoA to the synthesis of either ATP or GTP and thus represents the only step of substrate-level phosphorylation in the TCA. The beta subunit provides nucleotide specificity of the enzyme and binds the substrate succinate, while the binding sites for coenzyme A and phosphate are found in the alpha subunit.</text>
</comment>
<comment type="catalytic activity">
    <reaction evidence="1">
        <text>succinate + ATP + CoA = succinyl-CoA + ADP + phosphate</text>
        <dbReference type="Rhea" id="RHEA:17661"/>
        <dbReference type="ChEBI" id="CHEBI:30031"/>
        <dbReference type="ChEBI" id="CHEBI:30616"/>
        <dbReference type="ChEBI" id="CHEBI:43474"/>
        <dbReference type="ChEBI" id="CHEBI:57287"/>
        <dbReference type="ChEBI" id="CHEBI:57292"/>
        <dbReference type="ChEBI" id="CHEBI:456216"/>
        <dbReference type="EC" id="6.2.1.5"/>
    </reaction>
    <physiologicalReaction direction="right-to-left" evidence="1">
        <dbReference type="Rhea" id="RHEA:17663"/>
    </physiologicalReaction>
</comment>
<comment type="catalytic activity">
    <reaction evidence="1">
        <text>GTP + succinate + CoA = succinyl-CoA + GDP + phosphate</text>
        <dbReference type="Rhea" id="RHEA:22120"/>
        <dbReference type="ChEBI" id="CHEBI:30031"/>
        <dbReference type="ChEBI" id="CHEBI:37565"/>
        <dbReference type="ChEBI" id="CHEBI:43474"/>
        <dbReference type="ChEBI" id="CHEBI:57287"/>
        <dbReference type="ChEBI" id="CHEBI:57292"/>
        <dbReference type="ChEBI" id="CHEBI:58189"/>
    </reaction>
    <physiologicalReaction direction="right-to-left" evidence="1">
        <dbReference type="Rhea" id="RHEA:22122"/>
    </physiologicalReaction>
</comment>
<comment type="cofactor">
    <cofactor evidence="1">
        <name>Mg(2+)</name>
        <dbReference type="ChEBI" id="CHEBI:18420"/>
    </cofactor>
    <text evidence="1">Binds 1 Mg(2+) ion per subunit.</text>
</comment>
<comment type="pathway">
    <text evidence="1">Carbohydrate metabolism; tricarboxylic acid cycle; succinate from succinyl-CoA (ligase route): step 1/1.</text>
</comment>
<comment type="subunit">
    <text evidence="1">Heterotetramer of two alpha and two beta subunits.</text>
</comment>
<comment type="similarity">
    <text evidence="1">Belongs to the succinate/malate CoA ligase beta subunit family.</text>
</comment>
<sequence length="388" mass="41323">MNLHEYQAKELLASYGLPVQGGILAHNGEEAAAAYDKLGGKFAVVKAQVHAGGRGKAGGVKVVKSREEAKEVAESLIGTNLVTYQTDANGQPVNSVLVCEDMYPVQTELYLGAVVDRSTRRVTFMASTEGGVEIEKVAAETPEKIFKVTVDPLVGLQPCQAREVAFQLGLKDKQINEFVKLMTGAYKAFVENDFALFEVNPLAVRENGALACVDGKIGIDSNALYRLPKIAELRDKSQENERELKASEFDLNYVALEGNIGCMVNGAGLAMATMDIIKLKGGQPANFLDVGGGATKDRVVEAFKLILEDKSVKGVLINIFGGIVRCDMIAEAIVAAVKEINVDVPVVVRLEGNNAELGAKILNESGLKLTSADGLNDAAEKIVAAVNA</sequence>
<dbReference type="EC" id="6.2.1.5" evidence="1"/>
<dbReference type="EMBL" id="AL157959">
    <property type="protein sequence ID" value="CAM08359.1"/>
    <property type="molecule type" value="Genomic_DNA"/>
</dbReference>
<dbReference type="PIR" id="D81882">
    <property type="entry name" value="D81882"/>
</dbReference>
<dbReference type="RefSeq" id="WP_002213744.1">
    <property type="nucleotide sequence ID" value="NC_003116.1"/>
</dbReference>
<dbReference type="SMR" id="Q9JUT0"/>
<dbReference type="EnsemblBacteria" id="CAM08359">
    <property type="protein sequence ID" value="CAM08359"/>
    <property type="gene ID" value="NMA1153"/>
</dbReference>
<dbReference type="KEGG" id="nma:NMA1153"/>
<dbReference type="HOGENOM" id="CLU_037430_0_2_4"/>
<dbReference type="UniPathway" id="UPA00223">
    <property type="reaction ID" value="UER00999"/>
</dbReference>
<dbReference type="Proteomes" id="UP000000626">
    <property type="component" value="Chromosome"/>
</dbReference>
<dbReference type="GO" id="GO:0005829">
    <property type="term" value="C:cytosol"/>
    <property type="evidence" value="ECO:0007669"/>
    <property type="project" value="TreeGrafter"/>
</dbReference>
<dbReference type="GO" id="GO:0042709">
    <property type="term" value="C:succinate-CoA ligase complex"/>
    <property type="evidence" value="ECO:0007669"/>
    <property type="project" value="TreeGrafter"/>
</dbReference>
<dbReference type="GO" id="GO:0005524">
    <property type="term" value="F:ATP binding"/>
    <property type="evidence" value="ECO:0007669"/>
    <property type="project" value="UniProtKB-UniRule"/>
</dbReference>
<dbReference type="GO" id="GO:0000287">
    <property type="term" value="F:magnesium ion binding"/>
    <property type="evidence" value="ECO:0007669"/>
    <property type="project" value="UniProtKB-UniRule"/>
</dbReference>
<dbReference type="GO" id="GO:0004775">
    <property type="term" value="F:succinate-CoA ligase (ADP-forming) activity"/>
    <property type="evidence" value="ECO:0007669"/>
    <property type="project" value="UniProtKB-UniRule"/>
</dbReference>
<dbReference type="GO" id="GO:0004776">
    <property type="term" value="F:succinate-CoA ligase (GDP-forming) activity"/>
    <property type="evidence" value="ECO:0007669"/>
    <property type="project" value="RHEA"/>
</dbReference>
<dbReference type="GO" id="GO:0006104">
    <property type="term" value="P:succinyl-CoA metabolic process"/>
    <property type="evidence" value="ECO:0007669"/>
    <property type="project" value="TreeGrafter"/>
</dbReference>
<dbReference type="GO" id="GO:0006099">
    <property type="term" value="P:tricarboxylic acid cycle"/>
    <property type="evidence" value="ECO:0007669"/>
    <property type="project" value="UniProtKB-UniRule"/>
</dbReference>
<dbReference type="FunFam" id="3.30.1490.20:FF:000002">
    <property type="entry name" value="Succinate--CoA ligase [ADP-forming] subunit beta"/>
    <property type="match status" value="1"/>
</dbReference>
<dbReference type="FunFam" id="3.30.470.20:FF:000002">
    <property type="entry name" value="Succinate--CoA ligase [ADP-forming] subunit beta"/>
    <property type="match status" value="1"/>
</dbReference>
<dbReference type="FunFam" id="3.40.50.261:FF:000001">
    <property type="entry name" value="Succinate--CoA ligase [ADP-forming] subunit beta"/>
    <property type="match status" value="1"/>
</dbReference>
<dbReference type="Gene3D" id="3.30.1490.20">
    <property type="entry name" value="ATP-grasp fold, A domain"/>
    <property type="match status" value="1"/>
</dbReference>
<dbReference type="Gene3D" id="3.30.470.20">
    <property type="entry name" value="ATP-grasp fold, B domain"/>
    <property type="match status" value="1"/>
</dbReference>
<dbReference type="Gene3D" id="3.40.50.261">
    <property type="entry name" value="Succinyl-CoA synthetase domains"/>
    <property type="match status" value="1"/>
</dbReference>
<dbReference type="HAMAP" id="MF_00558">
    <property type="entry name" value="Succ_CoA_beta"/>
    <property type="match status" value="1"/>
</dbReference>
<dbReference type="InterPro" id="IPR011761">
    <property type="entry name" value="ATP-grasp"/>
</dbReference>
<dbReference type="InterPro" id="IPR013650">
    <property type="entry name" value="ATP-grasp_succ-CoA_synth-type"/>
</dbReference>
<dbReference type="InterPro" id="IPR013815">
    <property type="entry name" value="ATP_grasp_subdomain_1"/>
</dbReference>
<dbReference type="InterPro" id="IPR017866">
    <property type="entry name" value="Succ-CoA_synthase_bsu_CS"/>
</dbReference>
<dbReference type="InterPro" id="IPR005811">
    <property type="entry name" value="SUCC_ACL_C"/>
</dbReference>
<dbReference type="InterPro" id="IPR005809">
    <property type="entry name" value="Succ_CoA_ligase-like_bsu"/>
</dbReference>
<dbReference type="InterPro" id="IPR016102">
    <property type="entry name" value="Succinyl-CoA_synth-like"/>
</dbReference>
<dbReference type="NCBIfam" id="NF001913">
    <property type="entry name" value="PRK00696.1"/>
    <property type="match status" value="1"/>
</dbReference>
<dbReference type="NCBIfam" id="TIGR01016">
    <property type="entry name" value="sucCoAbeta"/>
    <property type="match status" value="1"/>
</dbReference>
<dbReference type="PANTHER" id="PTHR11815:SF10">
    <property type="entry name" value="SUCCINATE--COA LIGASE [GDP-FORMING] SUBUNIT BETA, MITOCHONDRIAL"/>
    <property type="match status" value="1"/>
</dbReference>
<dbReference type="PANTHER" id="PTHR11815">
    <property type="entry name" value="SUCCINYL-COA SYNTHETASE BETA CHAIN"/>
    <property type="match status" value="1"/>
</dbReference>
<dbReference type="Pfam" id="PF08442">
    <property type="entry name" value="ATP-grasp_2"/>
    <property type="match status" value="1"/>
</dbReference>
<dbReference type="Pfam" id="PF00549">
    <property type="entry name" value="Ligase_CoA"/>
    <property type="match status" value="1"/>
</dbReference>
<dbReference type="PIRSF" id="PIRSF001554">
    <property type="entry name" value="SucCS_beta"/>
    <property type="match status" value="1"/>
</dbReference>
<dbReference type="SUPFAM" id="SSF56059">
    <property type="entry name" value="Glutathione synthetase ATP-binding domain-like"/>
    <property type="match status" value="1"/>
</dbReference>
<dbReference type="SUPFAM" id="SSF52210">
    <property type="entry name" value="Succinyl-CoA synthetase domains"/>
    <property type="match status" value="1"/>
</dbReference>
<dbReference type="PROSITE" id="PS50975">
    <property type="entry name" value="ATP_GRASP"/>
    <property type="match status" value="1"/>
</dbReference>
<dbReference type="PROSITE" id="PS01217">
    <property type="entry name" value="SUCCINYL_COA_LIG_3"/>
    <property type="match status" value="1"/>
</dbReference>
<name>SUCC_NEIMA</name>
<keyword id="KW-0067">ATP-binding</keyword>
<keyword id="KW-0436">Ligase</keyword>
<keyword id="KW-0460">Magnesium</keyword>
<keyword id="KW-0479">Metal-binding</keyword>
<keyword id="KW-0547">Nucleotide-binding</keyword>
<keyword id="KW-0816">Tricarboxylic acid cycle</keyword>
<evidence type="ECO:0000255" key="1">
    <source>
        <dbReference type="HAMAP-Rule" id="MF_00558"/>
    </source>
</evidence>
<protein>
    <recommendedName>
        <fullName evidence="1">Succinate--CoA ligase [ADP-forming] subunit beta</fullName>
        <ecNumber evidence="1">6.2.1.5</ecNumber>
    </recommendedName>
    <alternativeName>
        <fullName evidence="1">Succinyl-CoA synthetase subunit beta</fullName>
        <shortName evidence="1">SCS-beta</shortName>
    </alternativeName>
</protein>